<feature type="chain" id="PRO_1000007255" description="Large ribosomal subunit protein bL28">
    <location>
        <begin position="1"/>
        <end position="94"/>
    </location>
</feature>
<sequence length="94" mass="10438">MSRECELTGTKPMVGNIVSHSQIKTKRRYLPNLVQVTLRSEALDQNFRMRIAAKALRTVDKLGGLDAFLAKAKEEGLSTKALKIKRDIAKKAVA</sequence>
<accession>Q0BWH4</accession>
<dbReference type="EMBL" id="CP000158">
    <property type="protein sequence ID" value="ABI77795.1"/>
    <property type="molecule type" value="Genomic_DNA"/>
</dbReference>
<dbReference type="RefSeq" id="WP_011648463.1">
    <property type="nucleotide sequence ID" value="NC_008358.1"/>
</dbReference>
<dbReference type="SMR" id="Q0BWH4"/>
<dbReference type="STRING" id="228405.HNE_3498"/>
<dbReference type="KEGG" id="hne:HNE_3498"/>
<dbReference type="eggNOG" id="COG0227">
    <property type="taxonomic scope" value="Bacteria"/>
</dbReference>
<dbReference type="HOGENOM" id="CLU_064548_4_2_5"/>
<dbReference type="Proteomes" id="UP000001959">
    <property type="component" value="Chromosome"/>
</dbReference>
<dbReference type="GO" id="GO:0022625">
    <property type="term" value="C:cytosolic large ribosomal subunit"/>
    <property type="evidence" value="ECO:0007669"/>
    <property type="project" value="TreeGrafter"/>
</dbReference>
<dbReference type="GO" id="GO:0003735">
    <property type="term" value="F:structural constituent of ribosome"/>
    <property type="evidence" value="ECO:0007669"/>
    <property type="project" value="InterPro"/>
</dbReference>
<dbReference type="GO" id="GO:0006412">
    <property type="term" value="P:translation"/>
    <property type="evidence" value="ECO:0007669"/>
    <property type="project" value="UniProtKB-UniRule"/>
</dbReference>
<dbReference type="Gene3D" id="2.30.170.40">
    <property type="entry name" value="Ribosomal protein L28/L24"/>
    <property type="match status" value="1"/>
</dbReference>
<dbReference type="HAMAP" id="MF_00373">
    <property type="entry name" value="Ribosomal_bL28"/>
    <property type="match status" value="1"/>
</dbReference>
<dbReference type="InterPro" id="IPR026569">
    <property type="entry name" value="Ribosomal_bL28"/>
</dbReference>
<dbReference type="InterPro" id="IPR034704">
    <property type="entry name" value="Ribosomal_bL28/bL31-like_sf"/>
</dbReference>
<dbReference type="InterPro" id="IPR001383">
    <property type="entry name" value="Ribosomal_bL28_bact-type"/>
</dbReference>
<dbReference type="InterPro" id="IPR037147">
    <property type="entry name" value="Ribosomal_bL28_sf"/>
</dbReference>
<dbReference type="NCBIfam" id="TIGR00009">
    <property type="entry name" value="L28"/>
    <property type="match status" value="1"/>
</dbReference>
<dbReference type="PANTHER" id="PTHR13528">
    <property type="entry name" value="39S RIBOSOMAL PROTEIN L28, MITOCHONDRIAL"/>
    <property type="match status" value="1"/>
</dbReference>
<dbReference type="PANTHER" id="PTHR13528:SF2">
    <property type="entry name" value="LARGE RIBOSOMAL SUBUNIT PROTEIN BL28M"/>
    <property type="match status" value="1"/>
</dbReference>
<dbReference type="Pfam" id="PF00830">
    <property type="entry name" value="Ribosomal_L28"/>
    <property type="match status" value="1"/>
</dbReference>
<dbReference type="SUPFAM" id="SSF143800">
    <property type="entry name" value="L28p-like"/>
    <property type="match status" value="1"/>
</dbReference>
<name>RL28_HYPNA</name>
<evidence type="ECO:0000255" key="1">
    <source>
        <dbReference type="HAMAP-Rule" id="MF_00373"/>
    </source>
</evidence>
<evidence type="ECO:0000305" key="2"/>
<reference key="1">
    <citation type="journal article" date="2006" name="J. Bacteriol.">
        <title>Comparative genomic evidence for a close relationship between the dimorphic prosthecate bacteria Hyphomonas neptunium and Caulobacter crescentus.</title>
        <authorList>
            <person name="Badger J.H."/>
            <person name="Hoover T.R."/>
            <person name="Brun Y.V."/>
            <person name="Weiner R.M."/>
            <person name="Laub M.T."/>
            <person name="Alexandre G."/>
            <person name="Mrazek J."/>
            <person name="Ren Q."/>
            <person name="Paulsen I.T."/>
            <person name="Nelson K.E."/>
            <person name="Khouri H.M."/>
            <person name="Radune D."/>
            <person name="Sosa J."/>
            <person name="Dodson R.J."/>
            <person name="Sullivan S.A."/>
            <person name="Rosovitz M.J."/>
            <person name="Madupu R."/>
            <person name="Brinkac L.M."/>
            <person name="Durkin A.S."/>
            <person name="Daugherty S.C."/>
            <person name="Kothari S.P."/>
            <person name="Giglio M.G."/>
            <person name="Zhou L."/>
            <person name="Haft D.H."/>
            <person name="Selengut J.D."/>
            <person name="Davidsen T.M."/>
            <person name="Yang Q."/>
            <person name="Zafar N."/>
            <person name="Ward N.L."/>
        </authorList>
    </citation>
    <scope>NUCLEOTIDE SEQUENCE [LARGE SCALE GENOMIC DNA]</scope>
    <source>
        <strain>ATCC 15444</strain>
    </source>
</reference>
<protein>
    <recommendedName>
        <fullName evidence="1">Large ribosomal subunit protein bL28</fullName>
    </recommendedName>
    <alternativeName>
        <fullName evidence="2">50S ribosomal protein L28</fullName>
    </alternativeName>
</protein>
<keyword id="KW-1185">Reference proteome</keyword>
<keyword id="KW-0687">Ribonucleoprotein</keyword>
<keyword id="KW-0689">Ribosomal protein</keyword>
<gene>
    <name evidence="1" type="primary">rpmB</name>
    <name type="ordered locus">HNE_3498</name>
</gene>
<proteinExistence type="inferred from homology"/>
<organism>
    <name type="scientific">Hyphomonas neptunium (strain ATCC 15444)</name>
    <dbReference type="NCBI Taxonomy" id="228405"/>
    <lineage>
        <taxon>Bacteria</taxon>
        <taxon>Pseudomonadati</taxon>
        <taxon>Pseudomonadota</taxon>
        <taxon>Alphaproteobacteria</taxon>
        <taxon>Hyphomonadales</taxon>
        <taxon>Hyphomonadaceae</taxon>
        <taxon>Hyphomonas</taxon>
    </lineage>
</organism>
<comment type="similarity">
    <text evidence="1">Belongs to the bacterial ribosomal protein bL28 family.</text>
</comment>